<keyword id="KW-0963">Cytoplasm</keyword>
<keyword id="KW-0520">NAD</keyword>
<keyword id="KW-0521">NADP</keyword>
<keyword id="KW-0560">Oxidoreductase</keyword>
<comment type="function">
    <text evidence="1">Catalyzes the NADPH-dependent reduction of glyoxylate and hydroxypyruvate into glycolate and glycerate, respectively.</text>
</comment>
<comment type="catalytic activity">
    <reaction evidence="1">
        <text>glycolate + NADP(+) = glyoxylate + NADPH + H(+)</text>
        <dbReference type="Rhea" id="RHEA:10992"/>
        <dbReference type="ChEBI" id="CHEBI:15378"/>
        <dbReference type="ChEBI" id="CHEBI:29805"/>
        <dbReference type="ChEBI" id="CHEBI:36655"/>
        <dbReference type="ChEBI" id="CHEBI:57783"/>
        <dbReference type="ChEBI" id="CHEBI:58349"/>
        <dbReference type="EC" id="1.1.1.79"/>
    </reaction>
</comment>
<comment type="catalytic activity">
    <reaction evidence="1">
        <text>(R)-glycerate + NAD(+) = 3-hydroxypyruvate + NADH + H(+)</text>
        <dbReference type="Rhea" id="RHEA:17905"/>
        <dbReference type="ChEBI" id="CHEBI:15378"/>
        <dbReference type="ChEBI" id="CHEBI:16659"/>
        <dbReference type="ChEBI" id="CHEBI:17180"/>
        <dbReference type="ChEBI" id="CHEBI:57540"/>
        <dbReference type="ChEBI" id="CHEBI:57945"/>
        <dbReference type="EC" id="1.1.1.81"/>
    </reaction>
</comment>
<comment type="catalytic activity">
    <reaction evidence="1">
        <text>(R)-glycerate + NADP(+) = 3-hydroxypyruvate + NADPH + H(+)</text>
        <dbReference type="Rhea" id="RHEA:18657"/>
        <dbReference type="ChEBI" id="CHEBI:15378"/>
        <dbReference type="ChEBI" id="CHEBI:16659"/>
        <dbReference type="ChEBI" id="CHEBI:17180"/>
        <dbReference type="ChEBI" id="CHEBI:57783"/>
        <dbReference type="ChEBI" id="CHEBI:58349"/>
        <dbReference type="EC" id="1.1.1.81"/>
    </reaction>
</comment>
<comment type="subunit">
    <text evidence="1">Homodimer.</text>
</comment>
<comment type="subcellular location">
    <subcellularLocation>
        <location evidence="1">Cytoplasm</location>
    </subcellularLocation>
</comment>
<comment type="similarity">
    <text evidence="1">Belongs to the D-isomer specific 2-hydroxyacid dehydrogenase family. GhrB subfamily.</text>
</comment>
<dbReference type="EC" id="1.1.1.79" evidence="1"/>
<dbReference type="EC" id="1.1.1.81" evidence="1"/>
<dbReference type="EMBL" id="AM286415">
    <property type="protein sequence ID" value="CAL14175.1"/>
    <property type="molecule type" value="Genomic_DNA"/>
</dbReference>
<dbReference type="RefSeq" id="WP_011817452.1">
    <property type="nucleotide sequence ID" value="NC_008800.1"/>
</dbReference>
<dbReference type="RefSeq" id="YP_001008293.1">
    <property type="nucleotide sequence ID" value="NC_008800.1"/>
</dbReference>
<dbReference type="SMR" id="A1JT62"/>
<dbReference type="KEGG" id="yen:YE4159"/>
<dbReference type="PATRIC" id="fig|393305.7.peg.4427"/>
<dbReference type="eggNOG" id="COG1052">
    <property type="taxonomic scope" value="Bacteria"/>
</dbReference>
<dbReference type="HOGENOM" id="CLU_019796_1_2_6"/>
<dbReference type="OrthoDB" id="9805416at2"/>
<dbReference type="Proteomes" id="UP000000642">
    <property type="component" value="Chromosome"/>
</dbReference>
<dbReference type="GO" id="GO:0005829">
    <property type="term" value="C:cytosol"/>
    <property type="evidence" value="ECO:0007669"/>
    <property type="project" value="TreeGrafter"/>
</dbReference>
<dbReference type="GO" id="GO:0005886">
    <property type="term" value="C:plasma membrane"/>
    <property type="evidence" value="ECO:0007669"/>
    <property type="project" value="UniProtKB-UniRule"/>
</dbReference>
<dbReference type="GO" id="GO:0030267">
    <property type="term" value="F:glyoxylate reductase (NADPH) activity"/>
    <property type="evidence" value="ECO:0007669"/>
    <property type="project" value="UniProtKB-UniRule"/>
</dbReference>
<dbReference type="GO" id="GO:0008465">
    <property type="term" value="F:hydroxypyruvate reductase (NADH) activity"/>
    <property type="evidence" value="ECO:0007669"/>
    <property type="project" value="RHEA"/>
</dbReference>
<dbReference type="GO" id="GO:0120509">
    <property type="term" value="F:hydroxypyruvate reductase (NADPH) activity"/>
    <property type="evidence" value="ECO:0007669"/>
    <property type="project" value="RHEA"/>
</dbReference>
<dbReference type="GO" id="GO:0051287">
    <property type="term" value="F:NAD binding"/>
    <property type="evidence" value="ECO:0007669"/>
    <property type="project" value="InterPro"/>
</dbReference>
<dbReference type="CDD" id="cd05301">
    <property type="entry name" value="GDH"/>
    <property type="match status" value="1"/>
</dbReference>
<dbReference type="FunFam" id="3.40.50.720:FF:000026">
    <property type="entry name" value="Glyoxylate/hydroxypyruvate reductase B"/>
    <property type="match status" value="1"/>
</dbReference>
<dbReference type="Gene3D" id="3.40.50.720">
    <property type="entry name" value="NAD(P)-binding Rossmann-like Domain"/>
    <property type="match status" value="2"/>
</dbReference>
<dbReference type="HAMAP" id="MF_01667">
    <property type="entry name" value="2_Hacid_dh_C_GhrB"/>
    <property type="match status" value="1"/>
</dbReference>
<dbReference type="InterPro" id="IPR050223">
    <property type="entry name" value="D-isomer_2-hydroxyacid_DH"/>
</dbReference>
<dbReference type="InterPro" id="IPR006139">
    <property type="entry name" value="D-isomer_2_OHA_DH_cat_dom"/>
</dbReference>
<dbReference type="InterPro" id="IPR029753">
    <property type="entry name" value="D-isomer_DH_CS"/>
</dbReference>
<dbReference type="InterPro" id="IPR029752">
    <property type="entry name" value="D-isomer_DH_CS1"/>
</dbReference>
<dbReference type="InterPro" id="IPR006140">
    <property type="entry name" value="D-isomer_DH_NAD-bd"/>
</dbReference>
<dbReference type="InterPro" id="IPR023756">
    <property type="entry name" value="Glyo/OHPyrv_Rdtase_B"/>
</dbReference>
<dbReference type="InterPro" id="IPR036291">
    <property type="entry name" value="NAD(P)-bd_dom_sf"/>
</dbReference>
<dbReference type="NCBIfam" id="NF011938">
    <property type="entry name" value="PRK15409.1"/>
    <property type="match status" value="1"/>
</dbReference>
<dbReference type="PANTHER" id="PTHR10996">
    <property type="entry name" value="2-HYDROXYACID DEHYDROGENASE-RELATED"/>
    <property type="match status" value="1"/>
</dbReference>
<dbReference type="PANTHER" id="PTHR10996:SF283">
    <property type="entry name" value="GLYOXYLATE_HYDROXYPYRUVATE REDUCTASE B"/>
    <property type="match status" value="1"/>
</dbReference>
<dbReference type="Pfam" id="PF00389">
    <property type="entry name" value="2-Hacid_dh"/>
    <property type="match status" value="1"/>
</dbReference>
<dbReference type="Pfam" id="PF02826">
    <property type="entry name" value="2-Hacid_dh_C"/>
    <property type="match status" value="1"/>
</dbReference>
<dbReference type="SUPFAM" id="SSF52283">
    <property type="entry name" value="Formate/glycerate dehydrogenase catalytic domain-like"/>
    <property type="match status" value="1"/>
</dbReference>
<dbReference type="SUPFAM" id="SSF51735">
    <property type="entry name" value="NAD(P)-binding Rossmann-fold domains"/>
    <property type="match status" value="1"/>
</dbReference>
<dbReference type="PROSITE" id="PS00065">
    <property type="entry name" value="D_2_HYDROXYACID_DH_1"/>
    <property type="match status" value="1"/>
</dbReference>
<dbReference type="PROSITE" id="PS00671">
    <property type="entry name" value="D_2_HYDROXYACID_DH_3"/>
    <property type="match status" value="1"/>
</dbReference>
<sequence>MKPSIVLYKSIPADLHQRLEQHFTVNSFEGLSSDNQPELLSALQQAEGLIGSGGKIDQAFLERAPKLRAASTISVGYDNFDVDALSQRGIALMHTPTVLTETVADTMMALVLSSARRVVELAERVKAGEWQDSIGDDWFGVDVHHKTIGILGMGRIGMALAQRAHFGFSMPVLYTSRRPHEAAEKRFGARRCSLDTLLAEVDFLCITLPMTEQTYHMIGPEQLAKMKSSAILINAGRGPVVDEQALIAALQDGTIHAAGLDVFAQEPLPVESPLLKLPNVVAVPHIGSATHETRYNMAACAVDNLIAALTGTVTENCVNPQVLQQA</sequence>
<organism>
    <name type="scientific">Yersinia enterocolitica serotype O:8 / biotype 1B (strain NCTC 13174 / 8081)</name>
    <dbReference type="NCBI Taxonomy" id="393305"/>
    <lineage>
        <taxon>Bacteria</taxon>
        <taxon>Pseudomonadati</taxon>
        <taxon>Pseudomonadota</taxon>
        <taxon>Gammaproteobacteria</taxon>
        <taxon>Enterobacterales</taxon>
        <taxon>Yersiniaceae</taxon>
        <taxon>Yersinia</taxon>
    </lineage>
</organism>
<gene>
    <name evidence="1" type="primary">ghrB</name>
    <name type="ordered locus">YE4159</name>
</gene>
<reference key="1">
    <citation type="journal article" date="2006" name="PLoS Genet.">
        <title>The complete genome sequence and comparative genome analysis of the high pathogenicity Yersinia enterocolitica strain 8081.</title>
        <authorList>
            <person name="Thomson N.R."/>
            <person name="Howard S."/>
            <person name="Wren B.W."/>
            <person name="Holden M.T.G."/>
            <person name="Crossman L."/>
            <person name="Challis G.L."/>
            <person name="Churcher C."/>
            <person name="Mungall K."/>
            <person name="Brooks K."/>
            <person name="Chillingworth T."/>
            <person name="Feltwell T."/>
            <person name="Abdellah Z."/>
            <person name="Hauser H."/>
            <person name="Jagels K."/>
            <person name="Maddison M."/>
            <person name="Moule S."/>
            <person name="Sanders M."/>
            <person name="Whitehead S."/>
            <person name="Quail M.A."/>
            <person name="Dougan G."/>
            <person name="Parkhill J."/>
            <person name="Prentice M.B."/>
        </authorList>
    </citation>
    <scope>NUCLEOTIDE SEQUENCE [LARGE SCALE GENOMIC DNA]</scope>
    <source>
        <strain>NCTC 13174 / 8081</strain>
    </source>
</reference>
<feature type="chain" id="PRO_0000348405" description="Glyoxylate/hydroxypyruvate reductase B">
    <location>
        <begin position="1"/>
        <end position="326"/>
    </location>
</feature>
<feature type="active site" evidence="1">
    <location>
        <position position="237"/>
    </location>
</feature>
<feature type="active site" evidence="1">
    <location>
        <position position="266"/>
    </location>
</feature>
<feature type="active site" description="Proton donor" evidence="1">
    <location>
        <position position="285"/>
    </location>
</feature>
<proteinExistence type="inferred from homology"/>
<name>GHRB_YERE8</name>
<accession>A1JT62</accession>
<evidence type="ECO:0000255" key="1">
    <source>
        <dbReference type="HAMAP-Rule" id="MF_01667"/>
    </source>
</evidence>
<protein>
    <recommendedName>
        <fullName evidence="1">Glyoxylate/hydroxypyruvate reductase B</fullName>
        <ecNumber evidence="1">1.1.1.79</ecNumber>
        <ecNumber evidence="1">1.1.1.81</ecNumber>
    </recommendedName>
</protein>